<comment type="function">
    <text evidence="1">Regulator of rDNA transcription. Acts in cooperation UBF/UBTF and positively regulates RNA polymerase I transcription (By similarity).</text>
</comment>
<comment type="catalytic activity">
    <reaction evidence="2">
        <text>GTP + H2O = GDP + phosphate + H(+)</text>
        <dbReference type="Rhea" id="RHEA:19669"/>
        <dbReference type="ChEBI" id="CHEBI:15377"/>
        <dbReference type="ChEBI" id="CHEBI:15378"/>
        <dbReference type="ChEBI" id="CHEBI:37565"/>
        <dbReference type="ChEBI" id="CHEBI:43474"/>
        <dbReference type="ChEBI" id="CHEBI:58189"/>
        <dbReference type="EC" id="3.6.5.2"/>
    </reaction>
</comment>
<comment type="subunit">
    <text evidence="1">Interacts with UBF/UBTF.</text>
</comment>
<comment type="interaction">
    <interactant intactId="EBI-4401868">
        <id>Q6T310</id>
    </interactant>
    <interactant intactId="EBI-7543347">
        <id>Q96PE2</id>
        <label>ARHGEF17</label>
    </interactant>
    <organismsDiffer>false</organismsDiffer>
    <experiments>2</experiments>
</comment>
<comment type="interaction">
    <interactant intactId="EBI-4401868">
        <id>Q6T310</id>
    </interactant>
    <interactant intactId="EBI-466029">
        <id>P42858</id>
        <label>HTT</label>
    </interactant>
    <organismsDiffer>false</organismsDiffer>
    <experiments>3</experiments>
</comment>
<comment type="subcellular location">
    <subcellularLocation>
        <location evidence="1">Nucleus</location>
        <location evidence="1">Nucleolus</location>
    </subcellularLocation>
    <text evidence="1">Associates with rDNA transcription unit throughout the cell cycle.</text>
</comment>
<comment type="tissue specificity">
    <text evidence="5 6">Widely expressed. Down-regulated in prostate tumors compared to normal prostate tissue. High levels found in colon tumor and normal colon tissue followed by small intestine, liver, jejunum, ileum, bladder and aorta. Lowest levels observed in endothelial cells.</text>
</comment>
<comment type="developmental stage">
    <text evidence="6">Down-regulated during development of THP-1 monocytes into macrophages.</text>
</comment>
<comment type="induction">
    <text evidence="6">Down-regulated by TGFB1.</text>
</comment>
<comment type="similarity">
    <text evidence="4">Belongs to the small GTPase superfamily. Ras family.</text>
</comment>
<comment type="caution">
    <text evidence="7">Although highly related to the Ras family, lacks the conserved prenylation motif at the C-terminus, which serves to target Ras proteins to membrane compartments.</text>
</comment>
<protein>
    <recommendedName>
        <fullName>Ras-like protein family member 11A</fullName>
        <ecNumber evidence="2">3.6.5.2</ecNumber>
    </recommendedName>
</protein>
<gene>
    <name evidence="12" type="primary">RASL11A</name>
</gene>
<feature type="chain" id="PRO_0000308360" description="Ras-like protein family member 11A">
    <location>
        <begin position="1"/>
        <end position="242"/>
    </location>
</feature>
<feature type="region of interest" description="Small GTPase-like">
    <location>
        <begin position="17"/>
        <end position="241"/>
    </location>
</feature>
<feature type="binding site" evidence="3">
    <location>
        <begin position="34"/>
        <end position="41"/>
    </location>
    <ligand>
        <name>GTP</name>
        <dbReference type="ChEBI" id="CHEBI:37565"/>
    </ligand>
</feature>
<feature type="binding site" evidence="3">
    <location>
        <begin position="81"/>
        <end position="85"/>
    </location>
    <ligand>
        <name>GTP</name>
        <dbReference type="ChEBI" id="CHEBI:37565"/>
    </ligand>
</feature>
<feature type="binding site" evidence="3">
    <location>
        <begin position="147"/>
        <end position="150"/>
    </location>
    <ligand>
        <name>GTP</name>
        <dbReference type="ChEBI" id="CHEBI:37565"/>
    </ligand>
</feature>
<sequence>MRPLSMSGHFLLAPIPESSSDYLLPKDIKLAVLGAGRVGKSAMIVRFLTKRFIGDYEPNTGKLYSRLVYVEGDQLSLQIQDTPGGVQIQDSLPQVVDSLSKCVQWAEGFLLVYSITDYDSYLSIRPLYQHIRKVHPDSKAPVIIVGNKGDLLHARQVQTQDGIQLANELGSLFLEISTSENYEDVCDVFQHLCKEVSKMHGLSGERRRASIIPRPRSPNMQDLKRRFKQALSPKVKAPSALG</sequence>
<dbReference type="EC" id="3.6.5.2" evidence="2"/>
<dbReference type="EMBL" id="AY439004">
    <property type="protein sequence ID" value="AAS07577.1"/>
    <property type="molecule type" value="mRNA"/>
</dbReference>
<dbReference type="EMBL" id="AL159977">
    <property type="status" value="NOT_ANNOTATED_CDS"/>
    <property type="molecule type" value="Genomic_DNA"/>
</dbReference>
<dbReference type="EMBL" id="CH471075">
    <property type="protein sequence ID" value="EAX08402.1"/>
    <property type="molecule type" value="Genomic_DNA"/>
</dbReference>
<dbReference type="EMBL" id="BC132703">
    <property type="protein sequence ID" value="AAI32704.1"/>
    <property type="molecule type" value="mRNA"/>
</dbReference>
<dbReference type="EMBL" id="BC136761">
    <property type="protein sequence ID" value="AAI36762.1"/>
    <property type="molecule type" value="mRNA"/>
</dbReference>
<dbReference type="CCDS" id="CCDS9321.1"/>
<dbReference type="RefSeq" id="NP_001318055.1">
    <property type="nucleotide sequence ID" value="NM_001331126.1"/>
</dbReference>
<dbReference type="RefSeq" id="NP_996563.1">
    <property type="nucleotide sequence ID" value="NM_206827.2"/>
</dbReference>
<dbReference type="SMR" id="Q6T310"/>
<dbReference type="BioGRID" id="132307">
    <property type="interactions" value="14"/>
</dbReference>
<dbReference type="FunCoup" id="Q6T310">
    <property type="interactions" value="469"/>
</dbReference>
<dbReference type="IntAct" id="Q6T310">
    <property type="interactions" value="12"/>
</dbReference>
<dbReference type="STRING" id="9606.ENSP00000241463"/>
<dbReference type="iPTMnet" id="Q6T310"/>
<dbReference type="PhosphoSitePlus" id="Q6T310"/>
<dbReference type="BioMuta" id="RASL11A"/>
<dbReference type="DMDM" id="74749333"/>
<dbReference type="jPOST" id="Q6T310"/>
<dbReference type="MassIVE" id="Q6T310"/>
<dbReference type="PaxDb" id="9606-ENSP00000241463"/>
<dbReference type="PeptideAtlas" id="Q6T310"/>
<dbReference type="ProteomicsDB" id="67364"/>
<dbReference type="Antibodypedia" id="62567">
    <property type="antibodies" value="23 antibodies from 11 providers"/>
</dbReference>
<dbReference type="DNASU" id="387496"/>
<dbReference type="Ensembl" id="ENST00000241463.5">
    <property type="protein sequence ID" value="ENSP00000241463.5"/>
    <property type="gene ID" value="ENSG00000122035.7"/>
</dbReference>
<dbReference type="GeneID" id="387496"/>
<dbReference type="KEGG" id="hsa:387496"/>
<dbReference type="MANE-Select" id="ENST00000241463.5">
    <property type="protein sequence ID" value="ENSP00000241463.5"/>
    <property type="RefSeq nucleotide sequence ID" value="NM_206827.2"/>
    <property type="RefSeq protein sequence ID" value="NP_996563.1"/>
</dbReference>
<dbReference type="UCSC" id="uc001urd.1">
    <property type="organism name" value="human"/>
</dbReference>
<dbReference type="AGR" id="HGNC:23802"/>
<dbReference type="CTD" id="387496"/>
<dbReference type="DisGeNET" id="387496"/>
<dbReference type="GeneCards" id="RASL11A"/>
<dbReference type="HGNC" id="HGNC:23802">
    <property type="gene designation" value="RASL11A"/>
</dbReference>
<dbReference type="HPA" id="ENSG00000122035">
    <property type="expression patterns" value="Low tissue specificity"/>
</dbReference>
<dbReference type="MIM" id="612403">
    <property type="type" value="gene"/>
</dbReference>
<dbReference type="neXtProt" id="NX_Q6T310"/>
<dbReference type="OpenTargets" id="ENSG00000122035"/>
<dbReference type="PharmGKB" id="PA134906253"/>
<dbReference type="VEuPathDB" id="HostDB:ENSG00000122035"/>
<dbReference type="eggNOG" id="KOG0395">
    <property type="taxonomic scope" value="Eukaryota"/>
</dbReference>
<dbReference type="GeneTree" id="ENSGT00940000161208"/>
<dbReference type="HOGENOM" id="CLU_041217_9_7_1"/>
<dbReference type="InParanoid" id="Q6T310"/>
<dbReference type="OMA" id="TMSGHCL"/>
<dbReference type="OrthoDB" id="18798at2759"/>
<dbReference type="PAN-GO" id="Q6T310">
    <property type="GO annotations" value="0 GO annotations based on evolutionary models"/>
</dbReference>
<dbReference type="PhylomeDB" id="Q6T310"/>
<dbReference type="TreeFam" id="TF318030"/>
<dbReference type="BRENDA" id="3.6.5.2">
    <property type="organism ID" value="2681"/>
</dbReference>
<dbReference type="PathwayCommons" id="Q6T310"/>
<dbReference type="SignaLink" id="Q6T310"/>
<dbReference type="BioGRID-ORCS" id="387496">
    <property type="hits" value="9 hits in 1149 CRISPR screens"/>
</dbReference>
<dbReference type="GenomeRNAi" id="387496"/>
<dbReference type="Pharos" id="Q6T310">
    <property type="development level" value="Tdark"/>
</dbReference>
<dbReference type="PRO" id="PR:Q6T310"/>
<dbReference type="Proteomes" id="UP000005640">
    <property type="component" value="Chromosome 13"/>
</dbReference>
<dbReference type="RNAct" id="Q6T310">
    <property type="molecule type" value="protein"/>
</dbReference>
<dbReference type="Bgee" id="ENSG00000122035">
    <property type="expression patterns" value="Expressed in mucosa of stomach and 102 other cell types or tissues"/>
</dbReference>
<dbReference type="GO" id="GO:0005730">
    <property type="term" value="C:nucleolus"/>
    <property type="evidence" value="ECO:0000250"/>
    <property type="project" value="UniProtKB"/>
</dbReference>
<dbReference type="GO" id="GO:0003925">
    <property type="term" value="F:G protein activity"/>
    <property type="evidence" value="ECO:0007669"/>
    <property type="project" value="UniProtKB-EC"/>
</dbReference>
<dbReference type="GO" id="GO:0005525">
    <property type="term" value="F:GTP binding"/>
    <property type="evidence" value="ECO:0007669"/>
    <property type="project" value="UniProtKB-KW"/>
</dbReference>
<dbReference type="GO" id="GO:0045943">
    <property type="term" value="P:positive regulation of transcription by RNA polymerase I"/>
    <property type="evidence" value="ECO:0000250"/>
    <property type="project" value="UniProtKB"/>
</dbReference>
<dbReference type="CDD" id="cd04146">
    <property type="entry name" value="RERG_RasL11_like"/>
    <property type="match status" value="1"/>
</dbReference>
<dbReference type="FunFam" id="3.40.50.300:FF:000718">
    <property type="entry name" value="Ras-like protein family member 11A"/>
    <property type="match status" value="1"/>
</dbReference>
<dbReference type="Gene3D" id="3.40.50.300">
    <property type="entry name" value="P-loop containing nucleotide triphosphate hydrolases"/>
    <property type="match status" value="1"/>
</dbReference>
<dbReference type="InterPro" id="IPR027417">
    <property type="entry name" value="P-loop_NTPase"/>
</dbReference>
<dbReference type="InterPro" id="IPR051065">
    <property type="entry name" value="Ras-related_GTPase"/>
</dbReference>
<dbReference type="InterPro" id="IPR005225">
    <property type="entry name" value="Small_GTP-bd"/>
</dbReference>
<dbReference type="InterPro" id="IPR001806">
    <property type="entry name" value="Small_GTPase"/>
</dbReference>
<dbReference type="NCBIfam" id="TIGR00231">
    <property type="entry name" value="small_GTP"/>
    <property type="match status" value="1"/>
</dbReference>
<dbReference type="PANTHER" id="PTHR45704">
    <property type="entry name" value="RAS-LIKE FAMILY MEMBER 11"/>
    <property type="match status" value="1"/>
</dbReference>
<dbReference type="Pfam" id="PF00071">
    <property type="entry name" value="Ras"/>
    <property type="match status" value="1"/>
</dbReference>
<dbReference type="PRINTS" id="PR00449">
    <property type="entry name" value="RASTRNSFRMNG"/>
</dbReference>
<dbReference type="SMART" id="SM00175">
    <property type="entry name" value="RAB"/>
    <property type="match status" value="1"/>
</dbReference>
<dbReference type="SMART" id="SM00173">
    <property type="entry name" value="RAS"/>
    <property type="match status" value="1"/>
</dbReference>
<dbReference type="SMART" id="SM00174">
    <property type="entry name" value="RHO"/>
    <property type="match status" value="1"/>
</dbReference>
<dbReference type="SUPFAM" id="SSF52540">
    <property type="entry name" value="P-loop containing nucleoside triphosphate hydrolases"/>
    <property type="match status" value="1"/>
</dbReference>
<dbReference type="PROSITE" id="PS51421">
    <property type="entry name" value="RAS"/>
    <property type="match status" value="1"/>
</dbReference>
<accession>Q6T310</accession>
<accession>B2RN97</accession>
<evidence type="ECO:0000250" key="1"/>
<evidence type="ECO:0000250" key="2">
    <source>
        <dbReference type="UniProtKB" id="P01116"/>
    </source>
</evidence>
<evidence type="ECO:0000250" key="3">
    <source>
        <dbReference type="UniProtKB" id="Q96A58"/>
    </source>
</evidence>
<evidence type="ECO:0000255" key="4"/>
<evidence type="ECO:0000269" key="5">
    <source>
    </source>
</evidence>
<evidence type="ECO:0000269" key="6">
    <source>
    </source>
</evidence>
<evidence type="ECO:0000305" key="7"/>
<evidence type="ECO:0000312" key="8">
    <source>
        <dbReference type="EMBL" id="AAI32704.1"/>
    </source>
</evidence>
<evidence type="ECO:0000312" key="9">
    <source>
        <dbReference type="EMBL" id="AAS07577.1"/>
    </source>
</evidence>
<evidence type="ECO:0000312" key="10">
    <source>
        <dbReference type="EMBL" id="AL159977"/>
    </source>
</evidence>
<evidence type="ECO:0000312" key="11">
    <source>
        <dbReference type="EMBL" id="EAX08402.1"/>
    </source>
</evidence>
<evidence type="ECO:0000312" key="12">
    <source>
        <dbReference type="HGNC" id="HGNC:23802"/>
    </source>
</evidence>
<name>RSLBA_HUMAN</name>
<reference evidence="7 9" key="1">
    <citation type="journal article" date="2004" name="Biochem. Biophys. Res. Commun.">
        <title>Rasl11a, member of a novel small monomeric GTPase gene family, is differentially expressed in prostate tumors.</title>
        <authorList>
            <person name="Louro R."/>
            <person name="Nakaya H.I."/>
            <person name="Paquola A.C.M."/>
            <person name="Martins E.A.L."/>
            <person name="da Silva A.M."/>
            <person name="Verjovski-Almeida S."/>
            <person name="Reis E.M."/>
        </authorList>
    </citation>
    <scope>NUCLEOTIDE SEQUENCE [MRNA]</scope>
    <scope>TISSUE SPECIFICITY</scope>
</reference>
<reference evidence="10" key="2">
    <citation type="journal article" date="2004" name="Nature">
        <title>The DNA sequence and analysis of human chromosome 13.</title>
        <authorList>
            <person name="Dunham A."/>
            <person name="Matthews L.H."/>
            <person name="Burton J."/>
            <person name="Ashurst J.L."/>
            <person name="Howe K.L."/>
            <person name="Ashcroft K.J."/>
            <person name="Beare D.M."/>
            <person name="Burford D.C."/>
            <person name="Hunt S.E."/>
            <person name="Griffiths-Jones S."/>
            <person name="Jones M.C."/>
            <person name="Keenan S.J."/>
            <person name="Oliver K."/>
            <person name="Scott C.E."/>
            <person name="Ainscough R."/>
            <person name="Almeida J.P."/>
            <person name="Ambrose K.D."/>
            <person name="Andrews D.T."/>
            <person name="Ashwell R.I.S."/>
            <person name="Babbage A.K."/>
            <person name="Bagguley C.L."/>
            <person name="Bailey J."/>
            <person name="Bannerjee R."/>
            <person name="Barlow K.F."/>
            <person name="Bates K."/>
            <person name="Beasley H."/>
            <person name="Bird C.P."/>
            <person name="Bray-Allen S."/>
            <person name="Brown A.J."/>
            <person name="Brown J.Y."/>
            <person name="Burrill W."/>
            <person name="Carder C."/>
            <person name="Carter N.P."/>
            <person name="Chapman J.C."/>
            <person name="Clamp M.E."/>
            <person name="Clark S.Y."/>
            <person name="Clarke G."/>
            <person name="Clee C.M."/>
            <person name="Clegg S.C."/>
            <person name="Cobley V."/>
            <person name="Collins J.E."/>
            <person name="Corby N."/>
            <person name="Coville G.J."/>
            <person name="Deloukas P."/>
            <person name="Dhami P."/>
            <person name="Dunham I."/>
            <person name="Dunn M."/>
            <person name="Earthrowl M.E."/>
            <person name="Ellington A.G."/>
            <person name="Faulkner L."/>
            <person name="Frankish A.G."/>
            <person name="Frankland J."/>
            <person name="French L."/>
            <person name="Garner P."/>
            <person name="Garnett J."/>
            <person name="Gilbert J.G.R."/>
            <person name="Gilson C.J."/>
            <person name="Ghori J."/>
            <person name="Grafham D.V."/>
            <person name="Gribble S.M."/>
            <person name="Griffiths C."/>
            <person name="Hall R.E."/>
            <person name="Hammond S."/>
            <person name="Harley J.L."/>
            <person name="Hart E.A."/>
            <person name="Heath P.D."/>
            <person name="Howden P.J."/>
            <person name="Huckle E.J."/>
            <person name="Hunt P.J."/>
            <person name="Hunt A.R."/>
            <person name="Johnson C."/>
            <person name="Johnson D."/>
            <person name="Kay M."/>
            <person name="Kimberley A.M."/>
            <person name="King A."/>
            <person name="Laird G.K."/>
            <person name="Langford C.J."/>
            <person name="Lawlor S."/>
            <person name="Leongamornlert D.A."/>
            <person name="Lloyd D.M."/>
            <person name="Lloyd C."/>
            <person name="Loveland J.E."/>
            <person name="Lovell J."/>
            <person name="Martin S."/>
            <person name="Mashreghi-Mohammadi M."/>
            <person name="McLaren S.J."/>
            <person name="McMurray A."/>
            <person name="Milne S."/>
            <person name="Moore M.J.F."/>
            <person name="Nickerson T."/>
            <person name="Palmer S.A."/>
            <person name="Pearce A.V."/>
            <person name="Peck A.I."/>
            <person name="Pelan S."/>
            <person name="Phillimore B."/>
            <person name="Porter K.M."/>
            <person name="Rice C.M."/>
            <person name="Searle S."/>
            <person name="Sehra H.K."/>
            <person name="Shownkeen R."/>
            <person name="Skuce C.D."/>
            <person name="Smith M."/>
            <person name="Steward C.A."/>
            <person name="Sycamore N."/>
            <person name="Tester J."/>
            <person name="Thomas D.W."/>
            <person name="Tracey A."/>
            <person name="Tromans A."/>
            <person name="Tubby B."/>
            <person name="Wall M."/>
            <person name="Wallis J.M."/>
            <person name="West A.P."/>
            <person name="Whitehead S.L."/>
            <person name="Willey D.L."/>
            <person name="Wilming L."/>
            <person name="Wray P.W."/>
            <person name="Wright M.W."/>
            <person name="Young L."/>
            <person name="Coulson A."/>
            <person name="Durbin R.M."/>
            <person name="Hubbard T."/>
            <person name="Sulston J.E."/>
            <person name="Beck S."/>
            <person name="Bentley D.R."/>
            <person name="Rogers J."/>
            <person name="Ross M.T."/>
        </authorList>
    </citation>
    <scope>NUCLEOTIDE SEQUENCE [LARGE SCALE GENOMIC DNA]</scope>
</reference>
<reference evidence="11" key="3">
    <citation type="submission" date="2005-07" db="EMBL/GenBank/DDBJ databases">
        <authorList>
            <person name="Mural R.J."/>
            <person name="Istrail S."/>
            <person name="Sutton G.G."/>
            <person name="Florea L."/>
            <person name="Halpern A.L."/>
            <person name="Mobarry C.M."/>
            <person name="Lippert R."/>
            <person name="Walenz B."/>
            <person name="Shatkay H."/>
            <person name="Dew I."/>
            <person name="Miller J.R."/>
            <person name="Flanigan M.J."/>
            <person name="Edwards N.J."/>
            <person name="Bolanos R."/>
            <person name="Fasulo D."/>
            <person name="Halldorsson B.V."/>
            <person name="Hannenhalli S."/>
            <person name="Turner R."/>
            <person name="Yooseph S."/>
            <person name="Lu F."/>
            <person name="Nusskern D.R."/>
            <person name="Shue B.C."/>
            <person name="Zheng X.H."/>
            <person name="Zhong F."/>
            <person name="Delcher A.L."/>
            <person name="Huson D.H."/>
            <person name="Kravitz S.A."/>
            <person name="Mouchard L."/>
            <person name="Reinert K."/>
            <person name="Remington K.A."/>
            <person name="Clark A.G."/>
            <person name="Waterman M.S."/>
            <person name="Eichler E.E."/>
            <person name="Adams M.D."/>
            <person name="Hunkapiller M.W."/>
            <person name="Myers E.W."/>
            <person name="Venter J.C."/>
        </authorList>
    </citation>
    <scope>NUCLEOTIDE SEQUENCE [LARGE SCALE GENOMIC DNA]</scope>
</reference>
<reference evidence="8" key="4">
    <citation type="journal article" date="2004" name="Genome Res.">
        <title>The status, quality, and expansion of the NIH full-length cDNA project: the Mammalian Gene Collection (MGC).</title>
        <authorList>
            <consortium name="The MGC Project Team"/>
        </authorList>
    </citation>
    <scope>NUCLEOTIDE SEQUENCE [LARGE SCALE MRNA]</scope>
    <source>
        <tissue evidence="8">Brain</tissue>
    </source>
</reference>
<reference evidence="7" key="5">
    <citation type="journal article" date="2007" name="Biochim. Biophys. Acta">
        <title>Cloning, genomic organization, and tissue-specific expression of the RASL11B gene.</title>
        <authorList>
            <person name="Stolle K."/>
            <person name="Schnoor M."/>
            <person name="Fuellen G."/>
            <person name="Spitzer M."/>
            <person name="Cullen P."/>
            <person name="Lorkowski S."/>
        </authorList>
    </citation>
    <scope>TISSUE SPECIFICITY</scope>
    <scope>DEVELOPMENTAL STAGE</scope>
    <scope>INDUCTION</scope>
</reference>
<keyword id="KW-0342">GTP-binding</keyword>
<keyword id="KW-0378">Hydrolase</keyword>
<keyword id="KW-0547">Nucleotide-binding</keyword>
<keyword id="KW-0539">Nucleus</keyword>
<keyword id="KW-1267">Proteomics identification</keyword>
<keyword id="KW-1185">Reference proteome</keyword>
<keyword id="KW-0804">Transcription</keyword>
<keyword id="KW-0805">Transcription regulation</keyword>
<organism>
    <name type="scientific">Homo sapiens</name>
    <name type="common">Human</name>
    <dbReference type="NCBI Taxonomy" id="9606"/>
    <lineage>
        <taxon>Eukaryota</taxon>
        <taxon>Metazoa</taxon>
        <taxon>Chordata</taxon>
        <taxon>Craniata</taxon>
        <taxon>Vertebrata</taxon>
        <taxon>Euteleostomi</taxon>
        <taxon>Mammalia</taxon>
        <taxon>Eutheria</taxon>
        <taxon>Euarchontoglires</taxon>
        <taxon>Primates</taxon>
        <taxon>Haplorrhini</taxon>
        <taxon>Catarrhini</taxon>
        <taxon>Hominidae</taxon>
        <taxon>Homo</taxon>
    </lineage>
</organism>
<proteinExistence type="evidence at protein level"/>